<gene>
    <name type="primary">GP</name>
</gene>
<feature type="signal peptide" evidence="5">
    <location>
        <begin position="1"/>
        <end position="19"/>
    </location>
</feature>
<feature type="chain" id="PRO_0000455554" description="Envelopment polyprotein">
    <location>
        <begin position="20"/>
        <end position="1073"/>
    </location>
</feature>
<feature type="chain" id="PRO_0000455555" description="Glycoprotein N">
    <location>
        <begin position="20"/>
        <end position="562"/>
    </location>
</feature>
<feature type="chain" id="PRO_0000455556" description="Glycoprotein C">
    <location>
        <begin position="563"/>
        <end position="1073"/>
    </location>
</feature>
<feature type="topological domain" description="Lumenal" evidence="2">
    <location>
        <begin position="20"/>
        <end position="453"/>
    </location>
</feature>
<feature type="transmembrane region" description="Helical" evidence="5">
    <location>
        <begin position="454"/>
        <end position="474"/>
    </location>
</feature>
<feature type="topological domain" description="Cytoplasmic" evidence="2">
    <location>
        <begin position="475"/>
        <end position="535"/>
    </location>
</feature>
<feature type="topological domain" description="Lumenal" evidence="5">
    <location>
        <begin position="563"/>
        <end position="1036"/>
    </location>
</feature>
<feature type="transmembrane region" description="Helical" evidence="5">
    <location>
        <begin position="1037"/>
        <end position="1057"/>
    </location>
</feature>
<feature type="topological domain" description="Cytoplasmic" evidence="2">
    <location>
        <begin position="1058"/>
        <end position="1073"/>
    </location>
</feature>
<feature type="region of interest" description="Golgi retention signal" evidence="2">
    <location>
        <begin position="475"/>
        <end position="521"/>
    </location>
</feature>
<feature type="region of interest" description="Internal signal sequence for glycoprotein C" evidence="2">
    <location>
        <begin position="536"/>
        <end position="562"/>
    </location>
</feature>
<feature type="region of interest" description="Fusion loop" evidence="4">
    <location>
        <begin position="650"/>
        <end position="656"/>
    </location>
</feature>
<feature type="region of interest" description="Fusion loop" evidence="4">
    <location>
        <begin position="691"/>
        <end position="705"/>
    </location>
</feature>
<feature type="site" description="Cleavage; by host signal peptidase" evidence="6">
    <location>
        <begin position="562"/>
        <end position="563"/>
    </location>
</feature>
<feature type="site" description="Important for glycoprotein C and glycoprotein N subcellular location" evidence="2">
    <location>
        <position position="1071"/>
    </location>
</feature>
<feature type="glycosylation site" description="N-linked (GlcNAc...) asparagine; by host" evidence="5">
    <location>
        <position position="33"/>
    </location>
</feature>
<feature type="glycosylation site" description="N-linked (GlcNAc...) asparagine; by host" evidence="5">
    <location>
        <position position="63"/>
    </location>
</feature>
<feature type="glycosylation site" description="N-linked (GlcNAc...) asparagine; by host" evidence="5">
    <location>
        <position position="853"/>
    </location>
</feature>
<feature type="glycosylation site" description="N-linked (GlcNAc...) asparagine; by host" evidence="5">
    <location>
        <position position="914"/>
    </location>
</feature>
<feature type="glycosylation site" description="N-linked (GlcNAc...) asparagine; by host" evidence="4">
    <location>
        <position position="936"/>
    </location>
</feature>
<feature type="disulfide bond" evidence="4">
    <location>
        <begin position="26"/>
        <end position="49"/>
    </location>
</feature>
<feature type="disulfide bond" evidence="4">
    <location>
        <begin position="143"/>
        <end position="156"/>
    </location>
</feature>
<feature type="disulfide bond" evidence="4">
    <location>
        <begin position="180"/>
        <end position="327"/>
    </location>
</feature>
<feature type="disulfide bond" evidence="4">
    <location>
        <begin position="206"/>
        <end position="216"/>
    </location>
</feature>
<feature type="disulfide bond" evidence="4">
    <location>
        <begin position="258"/>
        <end position="305"/>
    </location>
</feature>
<feature type="disulfide bond" evidence="4">
    <location>
        <begin position="287"/>
        <end position="292"/>
    </location>
</feature>
<feature type="disulfide bond" evidence="4">
    <location>
        <begin position="349"/>
        <end position="352"/>
    </location>
</feature>
<feature type="disulfide bond" evidence="4">
    <location>
        <begin position="356"/>
        <end position="424"/>
    </location>
</feature>
<feature type="disulfide bond" evidence="4">
    <location>
        <begin position="376"/>
        <end position="381"/>
    </location>
</feature>
<feature type="disulfide bond" evidence="4">
    <location>
        <begin position="563"/>
        <end position="604"/>
    </location>
</feature>
<feature type="disulfide bond" evidence="4">
    <location>
        <begin position="576"/>
        <end position="586"/>
    </location>
</feature>
<feature type="disulfide bond" evidence="4">
    <location>
        <begin position="629"/>
        <end position="725"/>
    </location>
</feature>
<feature type="disulfide bond" evidence="4">
    <location>
        <begin position="644"/>
        <end position="841"/>
    </location>
</feature>
<feature type="disulfide bond" evidence="4">
    <location>
        <begin position="650"/>
        <end position="698"/>
    </location>
</feature>
<feature type="disulfide bond" evidence="4">
    <location>
        <begin position="656"/>
        <end position="705"/>
    </location>
</feature>
<feature type="disulfide bond" evidence="4">
    <location>
        <begin position="660"/>
        <end position="687"/>
    </location>
</feature>
<feature type="disulfide bond" evidence="4">
    <location>
        <begin position="691"/>
        <end position="696"/>
    </location>
</feature>
<feature type="disulfide bond" evidence="4">
    <location>
        <begin position="778"/>
        <end position="793"/>
    </location>
</feature>
<feature type="disulfide bond" evidence="4">
    <location>
        <begin position="809"/>
        <end position="823"/>
    </location>
</feature>
<feature type="disulfide bond" evidence="4">
    <location>
        <begin position="908"/>
        <end position="978"/>
    </location>
</feature>
<feature type="disulfide bond" evidence="4">
    <location>
        <begin position="918"/>
        <end position="921"/>
    </location>
</feature>
<feature type="disulfide bond" evidence="4">
    <location>
        <begin position="943"/>
        <end position="974"/>
    </location>
</feature>
<feature type="sequence conflict" description="In Ref. 1; ADZ04471." evidence="8" ref="1">
    <original>M</original>
    <variation>T</variation>
    <location>
        <position position="321"/>
    </location>
</feature>
<feature type="sequence conflict" description="In Ref. 1; ADZ04471." evidence="8" ref="1">
    <original>S</original>
    <variation>R</variation>
    <location>
        <position position="962"/>
    </location>
</feature>
<feature type="strand" evidence="9">
    <location>
        <begin position="628"/>
        <end position="631"/>
    </location>
</feature>
<feature type="strand" evidence="9">
    <location>
        <begin position="635"/>
        <end position="638"/>
    </location>
</feature>
<feature type="strand" evidence="9">
    <location>
        <begin position="641"/>
        <end position="649"/>
    </location>
</feature>
<feature type="strand" evidence="9">
    <location>
        <begin position="653"/>
        <end position="655"/>
    </location>
</feature>
<feature type="strand" evidence="9">
    <location>
        <begin position="657"/>
        <end position="659"/>
    </location>
</feature>
<feature type="strand" evidence="9">
    <location>
        <begin position="681"/>
        <end position="693"/>
    </location>
</feature>
<feature type="turn" evidence="9">
    <location>
        <begin position="694"/>
        <end position="697"/>
    </location>
</feature>
<feature type="turn" evidence="9">
    <location>
        <begin position="699"/>
        <end position="701"/>
    </location>
</feature>
<feature type="strand" evidence="9">
    <location>
        <begin position="703"/>
        <end position="713"/>
    </location>
</feature>
<feature type="strand" evidence="9">
    <location>
        <begin position="719"/>
        <end position="729"/>
    </location>
</feature>
<feature type="strand" evidence="9">
    <location>
        <begin position="777"/>
        <end position="785"/>
    </location>
</feature>
<feature type="strand" evidence="9">
    <location>
        <begin position="790"/>
        <end position="793"/>
    </location>
</feature>
<feature type="strand" evidence="9">
    <location>
        <begin position="809"/>
        <end position="811"/>
    </location>
</feature>
<feature type="helix" evidence="9">
    <location>
        <begin position="812"/>
        <end position="817"/>
    </location>
</feature>
<feature type="turn" evidence="9">
    <location>
        <begin position="820"/>
        <end position="822"/>
    </location>
</feature>
<feature type="helix" evidence="9">
    <location>
        <begin position="827"/>
        <end position="829"/>
    </location>
</feature>
<feature type="strand" evidence="9">
    <location>
        <begin position="830"/>
        <end position="834"/>
    </location>
</feature>
<feature type="strand" evidence="9">
    <location>
        <begin position="836"/>
        <end position="843"/>
    </location>
</feature>
<feature type="turn" evidence="9">
    <location>
        <begin position="849"/>
        <end position="851"/>
    </location>
</feature>
<evidence type="ECO:0000250" key="1">
    <source>
        <dbReference type="UniProtKB" id="P03518"/>
    </source>
</evidence>
<evidence type="ECO:0000250" key="2">
    <source>
        <dbReference type="UniProtKB" id="P09613"/>
    </source>
</evidence>
<evidence type="ECO:0000250" key="3">
    <source>
        <dbReference type="UniProtKB" id="P21401"/>
    </source>
</evidence>
<evidence type="ECO:0000250" key="4">
    <source>
        <dbReference type="UniProtKB" id="R4V2Q5"/>
    </source>
</evidence>
<evidence type="ECO:0000255" key="5"/>
<evidence type="ECO:0000269" key="6">
    <source>
    </source>
</evidence>
<evidence type="ECO:0000269" key="7">
    <source>
    </source>
</evidence>
<evidence type="ECO:0000305" key="8"/>
<evidence type="ECO:0007829" key="9">
    <source>
        <dbReference type="PDB" id="8WSU"/>
    </source>
</evidence>
<dbReference type="EMBL" id="HM745931">
    <property type="protein sequence ID" value="ADZ04471.1"/>
    <property type="molecule type" value="Viral_cRNA"/>
</dbReference>
<dbReference type="EMBL" id="KP202164">
    <property type="protein sequence ID" value="AJD86039.1"/>
    <property type="molecule type" value="Genomic_RNA"/>
</dbReference>
<dbReference type="RefSeq" id="YP_006504094.1">
    <property type="nucleotide sequence ID" value="NC_018138.1"/>
</dbReference>
<dbReference type="PDB" id="8WSU">
    <property type="method" value="X-ray"/>
    <property type="resolution" value="3.30 A"/>
    <property type="chains" value="A/D=563-995"/>
</dbReference>
<dbReference type="PDBsum" id="8WSU"/>
<dbReference type="SMR" id="A0A0B5A886"/>
<dbReference type="GlyCosmos" id="A0A0B5A886">
    <property type="glycosylation" value="5 sites, No reported glycans"/>
</dbReference>
<dbReference type="KEGG" id="vg:13231111"/>
<dbReference type="Proteomes" id="UP000117954">
    <property type="component" value="Genome"/>
</dbReference>
<dbReference type="Proteomes" id="UP000201130">
    <property type="component" value="Genome"/>
</dbReference>
<dbReference type="GO" id="GO:0044167">
    <property type="term" value="C:host cell endoplasmic reticulum membrane"/>
    <property type="evidence" value="ECO:0007669"/>
    <property type="project" value="UniProtKB-SubCell"/>
</dbReference>
<dbReference type="GO" id="GO:0044178">
    <property type="term" value="C:host cell Golgi membrane"/>
    <property type="evidence" value="ECO:0007669"/>
    <property type="project" value="UniProtKB-SubCell"/>
</dbReference>
<dbReference type="GO" id="GO:0016020">
    <property type="term" value="C:membrane"/>
    <property type="evidence" value="ECO:0007669"/>
    <property type="project" value="UniProtKB-KW"/>
</dbReference>
<dbReference type="GO" id="GO:0055036">
    <property type="term" value="C:virion membrane"/>
    <property type="evidence" value="ECO:0007669"/>
    <property type="project" value="UniProtKB-SubCell"/>
</dbReference>
<dbReference type="GO" id="GO:0098670">
    <property type="term" value="P:entry receptor-mediated virion attachment to host cell"/>
    <property type="evidence" value="ECO:0007669"/>
    <property type="project" value="UniProtKB-KW"/>
</dbReference>
<dbReference type="GO" id="GO:0039654">
    <property type="term" value="P:fusion of virus membrane with host endosome membrane"/>
    <property type="evidence" value="ECO:0007669"/>
    <property type="project" value="UniProtKB-KW"/>
</dbReference>
<dbReference type="GO" id="GO:0046718">
    <property type="term" value="P:symbiont entry into host cell"/>
    <property type="evidence" value="ECO:0007669"/>
    <property type="project" value="UniProtKB-KW"/>
</dbReference>
<dbReference type="Gene3D" id="2.60.40.3770">
    <property type="match status" value="1"/>
</dbReference>
<dbReference type="Gene3D" id="2.60.98.50">
    <property type="match status" value="1"/>
</dbReference>
<dbReference type="InterPro" id="IPR043603">
    <property type="entry name" value="Phlebo_G2_C"/>
</dbReference>
<dbReference type="InterPro" id="IPR010826">
    <property type="entry name" value="Phlebovirus_G1"/>
</dbReference>
<dbReference type="InterPro" id="IPR009878">
    <property type="entry name" value="Phlebovirus_G2_fusion"/>
</dbReference>
<dbReference type="Pfam" id="PF19019">
    <property type="entry name" value="Phlebo_G2_C"/>
    <property type="match status" value="1"/>
</dbReference>
<dbReference type="Pfam" id="PF07243">
    <property type="entry name" value="Phlebovirus_G1"/>
    <property type="match status" value="1"/>
</dbReference>
<dbReference type="Pfam" id="PF07245">
    <property type="entry name" value="Phlebovirus_G2"/>
    <property type="match status" value="1"/>
</dbReference>
<reference key="1">
    <citation type="journal article" date="2011" name="N. Engl. J. Med.">
        <title>Fever with thrombocytopenia associated with a novel bunyavirus in China.</title>
        <authorList>
            <person name="Yu X.J."/>
            <person name="Liang M.F."/>
            <person name="Zhang S.Y."/>
            <person name="Liu Y."/>
            <person name="Li J.D."/>
            <person name="Sun Y.L."/>
            <person name="Zhang L."/>
            <person name="Zhang Q.F."/>
            <person name="Popov V.L."/>
            <person name="Li C."/>
            <person name="Qu J."/>
            <person name="Li Q."/>
            <person name="Zhang Y.P."/>
            <person name="Hai R."/>
            <person name="Wu W."/>
            <person name="Wang Q."/>
            <person name="Zhan F.X."/>
            <person name="Wang X.J."/>
            <person name="Kan B."/>
            <person name="Wang S.W."/>
            <person name="Wan K.L."/>
            <person name="Jing H.Q."/>
            <person name="Lu J.X."/>
            <person name="Yin W.W."/>
            <person name="Zhou H."/>
            <person name="Guan X.H."/>
            <person name="Liu J.F."/>
            <person name="Bi Z.Q."/>
            <person name="Liu G.H."/>
            <person name="Ren J."/>
            <person name="Wang H."/>
            <person name="Zhao Z."/>
            <person name="Song J.D."/>
            <person name="He J.R."/>
            <person name="Wan T."/>
            <person name="Zhang J.S."/>
            <person name="Fu X.P."/>
            <person name="Sun L.N."/>
            <person name="Dong X.P."/>
            <person name="Feng Z.J."/>
            <person name="Yang W.Z."/>
            <person name="Hong T."/>
            <person name="Zhang Y."/>
            <person name="Walker D.H."/>
            <person name="Wang Y."/>
            <person name="Li D.X."/>
        </authorList>
    </citation>
    <scope>NUCLEOTIDE SEQUENCE [GENOMIC DNA]</scope>
</reference>
<reference key="2">
    <citation type="journal article" date="2015" name="J. Virol.">
        <title>A reverse genetic system for severe fever with thrombocytopenia syndrome virus.</title>
        <authorList>
            <person name="Brennan B."/>
            <person name="Li P."/>
            <person name="Zhang S."/>
            <person name="Li A."/>
            <person name="Liang M."/>
            <person name="Li D."/>
            <person name="Elliott R.M."/>
        </authorList>
    </citation>
    <scope>NUCLEOTIDE SEQUENCE [GENOMIC DNA]</scope>
</reference>
<reference key="3">
    <citation type="journal article" date="2016" name="PLoS ONE">
        <title>Evidence that Processing of the Severe Fever with Thrombocytopenia Syndrome Virus Gn/Gc Polyprotein Is Critical for Viral Infectivity and Requires an Internal Gc Signal Peptide.</title>
        <authorList>
            <person name="Plegge T."/>
            <person name="Hofmann-Winkler H."/>
            <person name="Spiegel M."/>
            <person name="Poehlmann S."/>
        </authorList>
    </citation>
    <scope>PROTEOLYTIC CLEAVAGE (ENVELOPMENT POLYPROTEIN)</scope>
    <scope>SUBCELLULAR LOCATION (GLYCOPROTEIN N)</scope>
    <scope>SUBCELLULAR LOCATION (GLYCOPROTEIN C)</scope>
</reference>
<reference key="4">
    <citation type="journal article" date="2018" name="Biomed. Res.">
        <title>Targeting of severe fever with thrombocytopenia syndrome virus structural proteins to the ERGIC (endoplasmic reticulum Golgi intermediate compartment) and Golgi complex.</title>
        <authorList>
            <person name="Lundu T."/>
            <person name="Tsuda Y."/>
            <person name="Ito R."/>
            <person name="Shimizu K."/>
            <person name="Kobayashi S."/>
            <person name="Yoshii K."/>
            <person name="Yoshimatsu K."/>
            <person name="Arikawa J."/>
            <person name="Kariwa H."/>
        </authorList>
    </citation>
    <scope>SUBCELLULAR LOCATION (GLYCOPROTEIN N)</scope>
    <scope>SUBCELLULAR LOCATION (GLYCOPROTEIN C)</scope>
    <scope>FUNCTION (GLYCOPROTEIN N)</scope>
    <source>
        <strain>YG1</strain>
    </source>
</reference>
<name>GP_SFTSV</name>
<proteinExistence type="evidence at protein level"/>
<protein>
    <recommendedName>
        <fullName>Envelopment polyprotein</fullName>
    </recommendedName>
    <alternativeName>
        <fullName>M polyprotein</fullName>
    </alternativeName>
    <component>
        <recommendedName>
            <fullName evidence="3">Glycoprotein N</fullName>
            <shortName>Gn</shortName>
        </recommendedName>
        <alternativeName>
            <fullName>Glycoprotein G1</fullName>
        </alternativeName>
    </component>
    <component>
        <recommendedName>
            <fullName evidence="3">Glycoprotein C</fullName>
            <shortName>Gc</shortName>
        </recommendedName>
        <alternativeName>
            <fullName>Glycoprotein G2</fullName>
        </alternativeName>
    </component>
</protein>
<organism>
    <name type="scientific">SFTS phlebovirus (isolate SFTSV/Human/China/HB29/2010)</name>
    <name type="common">Severe fever with thrombocytopenia virus</name>
    <dbReference type="NCBI Taxonomy" id="992212"/>
    <lineage>
        <taxon>Viruses</taxon>
        <taxon>Riboviria</taxon>
        <taxon>Orthornavirae</taxon>
        <taxon>Negarnaviricota</taxon>
        <taxon>Polyploviricotina</taxon>
        <taxon>Ellioviricetes</taxon>
        <taxon>Bunyavirales</taxon>
        <taxon>Phenuiviridae</taxon>
        <taxon>Bandavirus</taxon>
        <taxon>Bandavirus dabieense</taxon>
    </lineage>
</organism>
<organismHost>
    <name type="scientific">Haemaphysalis longicornis</name>
    <name type="common">Bush tick</name>
    <dbReference type="NCBI Taxonomy" id="44386"/>
</organismHost>
<organismHost>
    <name type="scientific">Homo sapiens</name>
    <name type="common">Human</name>
    <dbReference type="NCBI Taxonomy" id="9606"/>
</organismHost>
<sequence>MMKVIWFSSLICLVIQCSGDSGPIICAGPIHSNKSAGIPHLLGYSEKICQIDRLIHVSSWLRNHSQFQGYVGQRGGRSQVSYYPAENSYSRWSGLLSPCDADWLGMLVVKKAKESDMIVPGPSYKGKVFFERPTFDGYVGWGCGSGKSRTESGELCSSDSGTSSGLLPSDRVLWIGDVACQPMTPIPEETFLELKSFSQSEFPDICKIDGIVFNQCEGESLPQPFDVAWMDVGHSHKIIMREHKTKWVQESSSKDFVCYKEGTGPCSESEEKACKTSGSCRGDMQFCKVAGCEHGEEASEAKCRCSLVHKPGEVVVSYGGMRVRPKCYGFSRMMATLEVNPPEQRIGQCTGCHLECINGGVRLITLTSELRSATVCASHFCSSASSGKKSTEIHFHSGSLVGKTAIHVKGALVDGTEFTFEGSCMFPDGCDAVDCTFCREFLKNPQCYPAKKWLFIIIVILLGYAGLMLLTNVLKAIGVWGSWVIAPVKLMFAIIKKLMRTVSCLVGKLMDRGRQVIHEEIGENGEGNQDDVRIEMARPRRVRHWMYSPVILTILAIGLAEGCDEMVHADSKLVSCRQGSGNMKECITTGRALLPAVNPGQEACLHFTAPGSPDSKCLKIKVKRINLKCKKSSSYFVPDARSRCTSVRRCRWAGDCQSGCPPHFTSNSFSDDWAGKMDRAGLGFSGCSDGCGGAACGCFNAAPSCIFWRKWVENPHGIIWKVSPCAAWVPSAVIELTMPSGEVRTFHPMSGIPTQVFKGVSVTYLGSDMEVSGLTDLCEIEELKSKKLALAPCNQAGMGVVGKVGEIQCSSEESARTIKKDGCIWNADLVGIELRVDDAVCYSKITSVEAVANYSAIPTTIGGLRFERSHDSQGKISGSPLDITAIRGSFSVNYRGLRLSLSEITATCTGEVTNVSGCYSCMTGAKVSIKLHSSKNSTAHVRCKGDETAFSVLEGVHSYIVSLSFDHAVVDEQCQLNCGGHESQVTLKGNLIFLDVPKFVDGSYMQTYHSTVPTGANIPSPTDWLNALFGNGLSRWILGVIGVLLGGLALFFLIMFLLKLGTKQVFRSRTKLA</sequence>
<comment type="function">
    <molecule>Glycoprotein N</molecule>
    <text evidence="2 3 4 7">Structural component of the virion that interacts with glycoprotein C (By similarity). It shields the hydrophobic fusion loops of the glycoprotein C, preventing premature fusion (By similarity). The glycoprotein protrusions are arranged on an icosahedral lattice, with T=12 triangulation (By similarity). They are able to attach the virion to the host cell receptor CD209/DC-SIGN and to promote fusion of membranes with the late endosome after clathrin-mediated endocytosis of the virion (By similarity). Plays a role in the packaging of ribonucleoproteins and polymerase during virus assembly (PubMed:29467349).</text>
</comment>
<comment type="function">
    <molecule>Glycoprotein C</molecule>
    <text evidence="2 3 4">Structural component of the virion that interacts with glycoprotein N (By similarity). Acts as a class II fusion protein that is activated upon acidification and subsequent repositioning of the glycoprotein N (By similarity). The glycoprotein protrusions are arranged on an icosahedral lattice, with T=12 triangulation (By similarity). They are able to attach the virion to the host cell receptor CD209/DC-SIGN and to promote fusion of membranes with the late endosome after clathrin-mediated endocytosis of the virion (By similarity).</text>
</comment>
<comment type="subunit">
    <molecule>Glycoprotein N</molecule>
    <text evidence="1 2">Homodimer. Heterodimer with glycoprotein C (By similarity). Homotrimer (postfusion) (By similarity).</text>
</comment>
<comment type="subunit">
    <molecule>Glycoprotein C</molecule>
    <text evidence="2">Heterodimer with glycoprotein N.</text>
</comment>
<comment type="subcellular location">
    <molecule>Glycoprotein N</molecule>
    <subcellularLocation>
        <location evidence="2">Virion membrane</location>
        <topology evidence="2">Single-pass type I membrane protein</topology>
    </subcellularLocation>
    <subcellularLocation>
        <location evidence="6 7">Host Golgi apparatus membrane</location>
        <topology evidence="2">Single-pass type I membrane protein</topology>
    </subcellularLocation>
    <subcellularLocation>
        <location evidence="6 7">Host endoplasmic reticulum membrane</location>
        <topology evidence="2">Single-pass type I membrane protein</topology>
    </subcellularLocation>
    <text evidence="6">Interaction between Glycoprotein N and Glycoprotein C is essential for proper targeting of Glycoprotein C to the Golgi complex, where virion budding occurs.</text>
</comment>
<comment type="subcellular location">
    <molecule>Glycoprotein C</molecule>
    <subcellularLocation>
        <location evidence="2">Virion membrane</location>
        <topology evidence="2">Single-pass type I membrane protein</topology>
    </subcellularLocation>
    <subcellularLocation>
        <location evidence="6 7">Host Golgi apparatus membrane</location>
        <topology evidence="2">Single-pass type I membrane protein</topology>
    </subcellularLocation>
    <subcellularLocation>
        <location evidence="6 7">Host endoplasmic reticulum membrane</location>
        <topology evidence="2">Single-pass type I membrane protein</topology>
    </subcellularLocation>
    <text evidence="6">Interaction between Glycoprotein N and Glycoprotein C is essential for proper targeting of Glycoprotein C to the Golgi complex, where virion budding occurs.</text>
</comment>
<comment type="domain">
    <molecule>Glycoprotein N</molecule>
    <text evidence="2">Contains a Golgi retention signal on its C-terminus. The cytoplasmic tail specifically interacts with the ribonucleoproteins and is critical for genome packaging.</text>
</comment>
<comment type="PTM">
    <molecule>Envelopment polyprotein</molecule>
    <text evidence="6">Specific enzymatic cleavages in vivo yield mature proteins including glycoprotein C and glycoprotein N.</text>
</comment>
<comment type="PTM">
    <molecule>Glycoprotein N</molecule>
    <text evidence="2">The cytoplasmic tail is Palmitoylated.</text>
</comment>
<comment type="PTM">
    <molecule>Glycoprotein N</molecule>
    <text evidence="2">Glycosylated.</text>
</comment>
<comment type="PTM">
    <molecule>Glycoprotein C</molecule>
    <text evidence="2">Palmitoylated.</text>
</comment>
<comment type="PTM">
    <molecule>Glycoprotein C</molecule>
    <text evidence="2">Glycosylated.</text>
</comment>
<comment type="similarity">
    <text evidence="8">Belongs to the phlebovirus envelope glycoprotein family.</text>
</comment>
<accession>A0A0B5A886</accession>
<accession>F1BA47</accession>
<keyword id="KW-0002">3D-structure</keyword>
<keyword id="KW-1015">Disulfide bond</keyword>
<keyword id="KW-1170">Fusion of virus membrane with host endosomal membrane</keyword>
<keyword id="KW-1168">Fusion of virus membrane with host membrane</keyword>
<keyword id="KW-0325">Glycoprotein</keyword>
<keyword id="KW-1038">Host endoplasmic reticulum</keyword>
<keyword id="KW-1040">Host Golgi apparatus</keyword>
<keyword id="KW-1043">Host membrane</keyword>
<keyword id="KW-0945">Host-virus interaction</keyword>
<keyword id="KW-0449">Lipoprotein</keyword>
<keyword id="KW-0472">Membrane</keyword>
<keyword id="KW-0564">Palmitate</keyword>
<keyword id="KW-1185">Reference proteome</keyword>
<keyword id="KW-0732">Signal</keyword>
<keyword id="KW-0812">Transmembrane</keyword>
<keyword id="KW-1133">Transmembrane helix</keyword>
<keyword id="KW-1161">Viral attachment to host cell</keyword>
<keyword id="KW-1234">Viral attachment to host entry receptor</keyword>
<keyword id="KW-1162">Viral penetration into host cytoplasm</keyword>
<keyword id="KW-0946">Virion</keyword>
<keyword id="KW-1160">Virus entry into host cell</keyword>